<name>HBBZ_MESAU</name>
<keyword id="KW-0349">Heme</keyword>
<keyword id="KW-0408">Iron</keyword>
<keyword id="KW-0479">Metal-binding</keyword>
<keyword id="KW-0561">Oxygen transport</keyword>
<keyword id="KW-1185">Reference proteome</keyword>
<keyword id="KW-0813">Transport</keyword>
<accession>P29627</accession>
<organism>
    <name type="scientific">Mesocricetus auratus</name>
    <name type="common">Golden hamster</name>
    <dbReference type="NCBI Taxonomy" id="10036"/>
    <lineage>
        <taxon>Eukaryota</taxon>
        <taxon>Metazoa</taxon>
        <taxon>Chordata</taxon>
        <taxon>Craniata</taxon>
        <taxon>Vertebrata</taxon>
        <taxon>Euteleostomi</taxon>
        <taxon>Mammalia</taxon>
        <taxon>Eutheria</taxon>
        <taxon>Euarchontoglires</taxon>
        <taxon>Glires</taxon>
        <taxon>Rodentia</taxon>
        <taxon>Myomorpha</taxon>
        <taxon>Muroidea</taxon>
        <taxon>Cricetidae</taxon>
        <taxon>Cricetinae</taxon>
        <taxon>Mesocricetus</taxon>
    </lineage>
</organism>
<proteinExistence type="evidence at transcript level"/>
<gene>
    <name type="primary">HBBZ</name>
</gene>
<reference key="1">
    <citation type="journal article" date="1992" name="Biochim. Biophys. Acta">
        <title>Cloning and sequence analysis of two embryonic beta-like globin cDNAs (y and z) of hamster.</title>
        <authorList>
            <person name="Li H."/>
            <person name="Subar M."/>
            <person name="Lee K.M."/>
            <person name="Boussios T."/>
        </authorList>
    </citation>
    <scope>NUCLEOTIDE SEQUENCE [MRNA]</scope>
</reference>
<protein>
    <recommendedName>
        <fullName>Hemoglobin subunit beta-Z</fullName>
    </recommendedName>
    <alternativeName>
        <fullName>Beta-Z-globin</fullName>
    </alternativeName>
    <alternativeName>
        <fullName>Hemoglobin beta-Z chain</fullName>
    </alternativeName>
</protein>
<dbReference type="EMBL" id="X64178">
    <property type="protein sequence ID" value="CAA45517.1"/>
    <property type="molecule type" value="mRNA"/>
</dbReference>
<dbReference type="PIR" id="S22356">
    <property type="entry name" value="S22356"/>
</dbReference>
<dbReference type="SMR" id="P29627"/>
<dbReference type="Proteomes" id="UP000189706">
    <property type="component" value="Unplaced"/>
</dbReference>
<dbReference type="GO" id="GO:0072562">
    <property type="term" value="C:blood microparticle"/>
    <property type="evidence" value="ECO:0007669"/>
    <property type="project" value="TreeGrafter"/>
</dbReference>
<dbReference type="GO" id="GO:0031838">
    <property type="term" value="C:haptoglobin-hemoglobin complex"/>
    <property type="evidence" value="ECO:0007669"/>
    <property type="project" value="TreeGrafter"/>
</dbReference>
<dbReference type="GO" id="GO:0005833">
    <property type="term" value="C:hemoglobin complex"/>
    <property type="evidence" value="ECO:0007669"/>
    <property type="project" value="InterPro"/>
</dbReference>
<dbReference type="GO" id="GO:0031720">
    <property type="term" value="F:haptoglobin binding"/>
    <property type="evidence" value="ECO:0007669"/>
    <property type="project" value="TreeGrafter"/>
</dbReference>
<dbReference type="GO" id="GO:0020037">
    <property type="term" value="F:heme binding"/>
    <property type="evidence" value="ECO:0007669"/>
    <property type="project" value="InterPro"/>
</dbReference>
<dbReference type="GO" id="GO:0031721">
    <property type="term" value="F:hemoglobin alpha binding"/>
    <property type="evidence" value="ECO:0007669"/>
    <property type="project" value="TreeGrafter"/>
</dbReference>
<dbReference type="GO" id="GO:0046872">
    <property type="term" value="F:metal ion binding"/>
    <property type="evidence" value="ECO:0007669"/>
    <property type="project" value="UniProtKB-KW"/>
</dbReference>
<dbReference type="GO" id="GO:0043177">
    <property type="term" value="F:organic acid binding"/>
    <property type="evidence" value="ECO:0007669"/>
    <property type="project" value="TreeGrafter"/>
</dbReference>
<dbReference type="GO" id="GO:0019825">
    <property type="term" value="F:oxygen binding"/>
    <property type="evidence" value="ECO:0007669"/>
    <property type="project" value="InterPro"/>
</dbReference>
<dbReference type="GO" id="GO:0005344">
    <property type="term" value="F:oxygen carrier activity"/>
    <property type="evidence" value="ECO:0007669"/>
    <property type="project" value="UniProtKB-KW"/>
</dbReference>
<dbReference type="GO" id="GO:0004601">
    <property type="term" value="F:peroxidase activity"/>
    <property type="evidence" value="ECO:0007669"/>
    <property type="project" value="TreeGrafter"/>
</dbReference>
<dbReference type="GO" id="GO:0042744">
    <property type="term" value="P:hydrogen peroxide catabolic process"/>
    <property type="evidence" value="ECO:0007669"/>
    <property type="project" value="TreeGrafter"/>
</dbReference>
<dbReference type="Gene3D" id="1.10.490.10">
    <property type="entry name" value="Globins"/>
    <property type="match status" value="1"/>
</dbReference>
<dbReference type="InterPro" id="IPR000971">
    <property type="entry name" value="Globin"/>
</dbReference>
<dbReference type="InterPro" id="IPR009050">
    <property type="entry name" value="Globin-like_sf"/>
</dbReference>
<dbReference type="InterPro" id="IPR012292">
    <property type="entry name" value="Globin/Proto"/>
</dbReference>
<dbReference type="InterPro" id="IPR002337">
    <property type="entry name" value="Hemoglobin_b"/>
</dbReference>
<dbReference type="InterPro" id="IPR050056">
    <property type="entry name" value="Hemoglobin_oxygen_transport"/>
</dbReference>
<dbReference type="PANTHER" id="PTHR11442">
    <property type="entry name" value="HEMOGLOBIN FAMILY MEMBER"/>
    <property type="match status" value="1"/>
</dbReference>
<dbReference type="PANTHER" id="PTHR11442:SF7">
    <property type="entry name" value="HEMOGLOBIN SUBUNIT EPSILON"/>
    <property type="match status" value="1"/>
</dbReference>
<dbReference type="Pfam" id="PF00042">
    <property type="entry name" value="Globin"/>
    <property type="match status" value="1"/>
</dbReference>
<dbReference type="PRINTS" id="PR00814">
    <property type="entry name" value="BETAHAEM"/>
</dbReference>
<dbReference type="SUPFAM" id="SSF46458">
    <property type="entry name" value="Globin-like"/>
    <property type="match status" value="1"/>
</dbReference>
<dbReference type="PROSITE" id="PS01033">
    <property type="entry name" value="GLOBIN"/>
    <property type="match status" value="1"/>
</dbReference>
<evidence type="ECO:0000255" key="1">
    <source>
        <dbReference type="PROSITE-ProRule" id="PRU00238"/>
    </source>
</evidence>
<feature type="chain" id="PRO_0000053018" description="Hemoglobin subunit beta-Z">
    <location>
        <begin position="1" status="less than"/>
        <end position="102"/>
    </location>
</feature>
<feature type="domain" description="Globin" evidence="1">
    <location>
        <begin position="1"/>
        <end position="102"/>
    </location>
</feature>
<feature type="binding site" description="distal binding residue" evidence="1">
    <location>
        <position position="19"/>
    </location>
    <ligand>
        <name>heme b</name>
        <dbReference type="ChEBI" id="CHEBI:60344"/>
    </ligand>
    <ligandPart>
        <name>Fe</name>
        <dbReference type="ChEBI" id="CHEBI:18248"/>
    </ligandPart>
</feature>
<feature type="binding site" description="proximal binding residue" evidence="1">
    <location>
        <position position="48"/>
    </location>
    <ligand>
        <name>heme b</name>
        <dbReference type="ChEBI" id="CHEBI:60344"/>
    </ligand>
    <ligandPart>
        <name>Fe</name>
        <dbReference type="ChEBI" id="CHEBI:18248"/>
    </ligandPart>
</feature>
<feature type="non-terminal residue">
    <location>
        <position position="1"/>
    </location>
</feature>
<comment type="function">
    <text>This is an embryonic beta chain.</text>
</comment>
<comment type="subunit">
    <text>Heterotetramer of two alpha chains and two beta chains.</text>
</comment>
<comment type="similarity">
    <text evidence="1">Belongs to the globin family.</text>
</comment>
<sequence length="102" mass="11227">FGNLSSAQAIMGNPRIRAHGKKVLTSLGLAVQNMDNLKETFAHLSELHCDKLHVDPENFKLLGNVLVIVLSTHFAKEFTPEVQAAWQKLVAGVANALSHKYH</sequence>